<comment type="similarity">
    <text evidence="1">Belongs to the complex I LYR family.</text>
</comment>
<accession>Q54T58</accession>
<protein>
    <recommendedName>
        <fullName>LYR motif-containing protein 1</fullName>
    </recommendedName>
</protein>
<name>LYRM1_DICDI</name>
<reference key="1">
    <citation type="journal article" date="2005" name="Nature">
        <title>The genome of the social amoeba Dictyostelium discoideum.</title>
        <authorList>
            <person name="Eichinger L."/>
            <person name="Pachebat J.A."/>
            <person name="Gloeckner G."/>
            <person name="Rajandream M.A."/>
            <person name="Sucgang R."/>
            <person name="Berriman M."/>
            <person name="Song J."/>
            <person name="Olsen R."/>
            <person name="Szafranski K."/>
            <person name="Xu Q."/>
            <person name="Tunggal B."/>
            <person name="Kummerfeld S."/>
            <person name="Madera M."/>
            <person name="Konfortov B.A."/>
            <person name="Rivero F."/>
            <person name="Bankier A.T."/>
            <person name="Lehmann R."/>
            <person name="Hamlin N."/>
            <person name="Davies R."/>
            <person name="Gaudet P."/>
            <person name="Fey P."/>
            <person name="Pilcher K."/>
            <person name="Chen G."/>
            <person name="Saunders D."/>
            <person name="Sodergren E.J."/>
            <person name="Davis P."/>
            <person name="Kerhornou A."/>
            <person name="Nie X."/>
            <person name="Hall N."/>
            <person name="Anjard C."/>
            <person name="Hemphill L."/>
            <person name="Bason N."/>
            <person name="Farbrother P."/>
            <person name="Desany B."/>
            <person name="Just E."/>
            <person name="Morio T."/>
            <person name="Rost R."/>
            <person name="Churcher C.M."/>
            <person name="Cooper J."/>
            <person name="Haydock S."/>
            <person name="van Driessche N."/>
            <person name="Cronin A."/>
            <person name="Goodhead I."/>
            <person name="Muzny D.M."/>
            <person name="Mourier T."/>
            <person name="Pain A."/>
            <person name="Lu M."/>
            <person name="Harper D."/>
            <person name="Lindsay R."/>
            <person name="Hauser H."/>
            <person name="James K.D."/>
            <person name="Quiles M."/>
            <person name="Madan Babu M."/>
            <person name="Saito T."/>
            <person name="Buchrieser C."/>
            <person name="Wardroper A."/>
            <person name="Felder M."/>
            <person name="Thangavelu M."/>
            <person name="Johnson D."/>
            <person name="Knights A."/>
            <person name="Loulseged H."/>
            <person name="Mungall K.L."/>
            <person name="Oliver K."/>
            <person name="Price C."/>
            <person name="Quail M.A."/>
            <person name="Urushihara H."/>
            <person name="Hernandez J."/>
            <person name="Rabbinowitsch E."/>
            <person name="Steffen D."/>
            <person name="Sanders M."/>
            <person name="Ma J."/>
            <person name="Kohara Y."/>
            <person name="Sharp S."/>
            <person name="Simmonds M.N."/>
            <person name="Spiegler S."/>
            <person name="Tivey A."/>
            <person name="Sugano S."/>
            <person name="White B."/>
            <person name="Walker D."/>
            <person name="Woodward J.R."/>
            <person name="Winckler T."/>
            <person name="Tanaka Y."/>
            <person name="Shaulsky G."/>
            <person name="Schleicher M."/>
            <person name="Weinstock G.M."/>
            <person name="Rosenthal A."/>
            <person name="Cox E.C."/>
            <person name="Chisholm R.L."/>
            <person name="Gibbs R.A."/>
            <person name="Loomis W.F."/>
            <person name="Platzer M."/>
            <person name="Kay R.R."/>
            <person name="Williams J.G."/>
            <person name="Dear P.H."/>
            <person name="Noegel A.A."/>
            <person name="Barrell B.G."/>
            <person name="Kuspa A."/>
        </authorList>
    </citation>
    <scope>NUCLEOTIDE SEQUENCE [LARGE SCALE GENOMIC DNA]</scope>
    <source>
        <strain>AX4</strain>
    </source>
</reference>
<dbReference type="EMBL" id="AAFI02000044">
    <property type="protein sequence ID" value="EAL66415.1"/>
    <property type="molecule type" value="Genomic_DNA"/>
</dbReference>
<dbReference type="RefSeq" id="XP_640393.1">
    <property type="nucleotide sequence ID" value="XM_635301.1"/>
</dbReference>
<dbReference type="SMR" id="Q54T58"/>
<dbReference type="PaxDb" id="44689-DDB0232410"/>
<dbReference type="EnsemblProtists" id="EAL66415">
    <property type="protein sequence ID" value="EAL66415"/>
    <property type="gene ID" value="DDB_G0281987"/>
</dbReference>
<dbReference type="GeneID" id="8623348"/>
<dbReference type="KEGG" id="ddi:DDB_G0281987"/>
<dbReference type="dictyBase" id="DDB_G0281987">
    <property type="gene designation" value="lyrm1"/>
</dbReference>
<dbReference type="VEuPathDB" id="AmoebaDB:DDB_G0281987"/>
<dbReference type="eggNOG" id="ENOG502RSN8">
    <property type="taxonomic scope" value="Eukaryota"/>
</dbReference>
<dbReference type="HOGENOM" id="CLU_2089354_0_0_1"/>
<dbReference type="InParanoid" id="Q54T58"/>
<dbReference type="OMA" id="YMYRSIL"/>
<dbReference type="PhylomeDB" id="Q54T58"/>
<dbReference type="PRO" id="PR:Q54T58"/>
<dbReference type="Proteomes" id="UP000002195">
    <property type="component" value="Chromosome 3"/>
</dbReference>
<dbReference type="CDD" id="cd20261">
    <property type="entry name" value="Complex1_LYR_LYRM1"/>
    <property type="match status" value="1"/>
</dbReference>
<dbReference type="InterPro" id="IPR008011">
    <property type="entry name" value="Complex1_LYR_dom"/>
</dbReference>
<dbReference type="InterPro" id="IPR045294">
    <property type="entry name" value="Complex1_LYR_LYRM1"/>
</dbReference>
<dbReference type="InterPro" id="IPR040330">
    <property type="entry name" value="LYRM1"/>
</dbReference>
<dbReference type="PANTHER" id="PTHR14273">
    <property type="entry name" value="LYR MOTIF-CONTAINING PROTEIN 1"/>
    <property type="match status" value="1"/>
</dbReference>
<dbReference type="PANTHER" id="PTHR14273:SF0">
    <property type="entry name" value="LYR MOTIF-CONTAINING PROTEIN 1"/>
    <property type="match status" value="1"/>
</dbReference>
<dbReference type="Pfam" id="PF05347">
    <property type="entry name" value="Complex1_LYR"/>
    <property type="match status" value="1"/>
</dbReference>
<keyword id="KW-1185">Reference proteome</keyword>
<proteinExistence type="inferred from homology"/>
<evidence type="ECO:0000305" key="1"/>
<sequence>MSKKVLTAYNAIDHTYFSQLSQRNKALYMYRSILRLANKWESDSQREDIRYETRSTFQKNKDLTDTEIINDKIEEARSRMLTALHYNIPYEKKKYNIPKYQIQMKPPPDPKDESGIC</sequence>
<feature type="chain" id="PRO_0000377486" description="LYR motif-containing protein 1">
    <location>
        <begin position="1"/>
        <end position="117"/>
    </location>
</feature>
<organism>
    <name type="scientific">Dictyostelium discoideum</name>
    <name type="common">Social amoeba</name>
    <dbReference type="NCBI Taxonomy" id="44689"/>
    <lineage>
        <taxon>Eukaryota</taxon>
        <taxon>Amoebozoa</taxon>
        <taxon>Evosea</taxon>
        <taxon>Eumycetozoa</taxon>
        <taxon>Dictyostelia</taxon>
        <taxon>Dictyosteliales</taxon>
        <taxon>Dictyosteliaceae</taxon>
        <taxon>Dictyostelium</taxon>
    </lineage>
</organism>
<gene>
    <name type="primary">lyrm1</name>
    <name type="ORF">DDB_G0281987</name>
</gene>